<organism>
    <name type="scientific">Enterobacteria phage S13</name>
    <name type="common">Bacteriophage S13</name>
    <dbReference type="NCBI Taxonomy" id="10844"/>
    <lineage>
        <taxon>Viruses</taxon>
        <taxon>Monodnaviria</taxon>
        <taxon>Sangervirae</taxon>
        <taxon>Phixviricota</taxon>
        <taxon>Malgrandaviricetes</taxon>
        <taxon>Petitvirales</taxon>
        <taxon>Microviridae</taxon>
        <taxon>Bullavirinae</taxon>
        <taxon>Sinsheimervirus</taxon>
        <taxon>Escherichia phage phiX174</taxon>
        <taxon>Escherichia phage phiX174</taxon>
    </lineage>
</organism>
<organismHost>
    <name type="scientific">Salmonella</name>
    <dbReference type="NCBI Taxonomy" id="590"/>
</organismHost>
<protein>
    <recommendedName>
        <fullName>Internal scaffolding protein B</fullName>
        <ecNumber evidence="1">3.4.-.-</ecNumber>
    </recommendedName>
    <alternativeName>
        <fullName>Scaffolding protein B</fullName>
        <shortName>GPB</shortName>
    </alternativeName>
</protein>
<keyword id="KW-0068">Autocatalytic cleavage</keyword>
<keyword id="KW-1035">Host cytoplasm</keyword>
<keyword id="KW-0378">Hydrolase</keyword>
<keyword id="KW-0645">Protease</keyword>
<keyword id="KW-1185">Reference proteome</keyword>
<keyword id="KW-0118">Viral capsid assembly</keyword>
<keyword id="KW-1188">Viral release from host cell</keyword>
<reference key="1">
    <citation type="journal article" date="1985" name="Gene">
        <title>Nucleotide sequence and genome organization of bacteriophage S13 DNA.</title>
        <authorList>
            <person name="Lau P.C.K."/>
            <person name="Spencer J.H."/>
        </authorList>
    </citation>
    <scope>NUCLEOTIDE SEQUENCE [GENOMIC DNA]</scope>
</reference>
<dbReference type="EC" id="3.4.-.-" evidence="1"/>
<dbReference type="EMBL" id="M14428">
    <property type="protein sequence ID" value="AAA32584.1"/>
    <property type="molecule type" value="Genomic_DNA"/>
</dbReference>
<dbReference type="PIR" id="JS0451">
    <property type="entry name" value="JS0451"/>
</dbReference>
<dbReference type="SMR" id="P07929"/>
<dbReference type="Proteomes" id="UP000002129">
    <property type="component" value="Segment"/>
</dbReference>
<dbReference type="GO" id="GO:0030430">
    <property type="term" value="C:host cell cytoplasm"/>
    <property type="evidence" value="ECO:0007669"/>
    <property type="project" value="UniProtKB-SubCell"/>
</dbReference>
<dbReference type="GO" id="GO:0008233">
    <property type="term" value="F:peptidase activity"/>
    <property type="evidence" value="ECO:0007669"/>
    <property type="project" value="UniProtKB-KW"/>
</dbReference>
<dbReference type="GO" id="GO:0006508">
    <property type="term" value="P:proteolysis"/>
    <property type="evidence" value="ECO:0007669"/>
    <property type="project" value="UniProtKB-KW"/>
</dbReference>
<dbReference type="GO" id="GO:0019069">
    <property type="term" value="P:viral capsid assembly"/>
    <property type="evidence" value="ECO:0007669"/>
    <property type="project" value="InterPro"/>
</dbReference>
<dbReference type="Gene3D" id="4.10.1260.10">
    <property type="entry name" value="Scaffolding protein gpD of bacteriophage procapsid"/>
    <property type="match status" value="1"/>
</dbReference>
<dbReference type="InterPro" id="IPR003513">
    <property type="entry name" value="Phage_B"/>
</dbReference>
<dbReference type="InterPro" id="IPR038149">
    <property type="entry name" value="Phage_B_sf"/>
</dbReference>
<dbReference type="Pfam" id="PF02304">
    <property type="entry name" value="Phage_B"/>
    <property type="match status" value="1"/>
</dbReference>
<accession>P07929</accession>
<evidence type="ECO:0000250" key="1">
    <source>
        <dbReference type="UniProtKB" id="P03633"/>
    </source>
</evidence>
<evidence type="ECO:0000256" key="2">
    <source>
        <dbReference type="SAM" id="MobiDB-lite"/>
    </source>
</evidence>
<evidence type="ECO:0000305" key="3"/>
<sequence length="120" mass="13919">MEQLTKNQAVATSQEAFQNQNEPQLRDENVHNDKSVHGVLNPTYQAGLRRDAVQPDIEAERKKRDEIEAGKSYCSRRFGGATCDDKSAQIYARFDKNDWRIQPAEFYRFHDAEVNTFGYF</sequence>
<feature type="chain" id="PRO_0000164871" description="Internal scaffolding protein B">
    <location>
        <begin position="1"/>
        <end position="120"/>
    </location>
</feature>
<feature type="region of interest" description="Disordered" evidence="2">
    <location>
        <begin position="1"/>
        <end position="64"/>
    </location>
</feature>
<feature type="compositionally biased region" description="Polar residues" evidence="2">
    <location>
        <begin position="1"/>
        <end position="23"/>
    </location>
</feature>
<feature type="compositionally biased region" description="Basic and acidic residues" evidence="2">
    <location>
        <begin position="24"/>
        <end position="36"/>
    </location>
</feature>
<feature type="compositionally biased region" description="Basic and acidic residues" evidence="2">
    <location>
        <begin position="48"/>
        <end position="64"/>
    </location>
</feature>
<feature type="site" description="Cleavage; by host" evidence="1">
    <location>
        <begin position="76"/>
        <end position="77"/>
    </location>
</feature>
<feature type="site" description="Cleavage; by autolysis" evidence="1">
    <location>
        <begin position="77"/>
        <end position="78"/>
    </location>
</feature>
<feature type="site" description="Cleavage; by autolysis" evidence="1">
    <location>
        <begin position="93"/>
        <end position="94"/>
    </location>
</feature>
<feature type="site" description="Cleavage; by autolysis" evidence="1">
    <location>
        <begin position="108"/>
        <end position="109"/>
    </location>
</feature>
<name>SCAFB_BPS13</name>
<proteinExistence type="inferred from homology"/>
<gene>
    <name type="primary">B</name>
</gene>
<comment type="function">
    <text evidence="1">Participates in the assembly of the viral procapsid in the cytoplasm. Forms first a 12S pre-assembly complex with protein H, and F and G pentamers, then twelve 12S complexes are joined by the D protein to form the procapsid. Internal scaffold protein B is released from the procapsid upon genome packaging. Autoproteolytic activity cleaves protein B and probably facilitates its removal through the pores of the procapsid.</text>
</comment>
<comment type="subunit">
    <text evidence="1">Component of the procapsid complex composed of 60 copies of the internally located B, 240 copies of the external scaffolding protein D, 60 copies of each of the viral structural proteins F and G proteins, and 12 copies of H.</text>
</comment>
<comment type="subcellular location">
    <subcellularLocation>
        <location evidence="1">Host cytoplasm</location>
    </subcellularLocation>
</comment>
<comment type="PTM">
    <text evidence="1">The proteolytic cleavage of the internal scaffolding protein B releases the scaffold protein in order to continue virion assembly.</text>
</comment>
<comment type="similarity">
    <text evidence="3">Belongs to the microviridae B protein family.</text>
</comment>